<evidence type="ECO:0000255" key="1">
    <source>
        <dbReference type="HAMAP-Rule" id="MF_00181"/>
    </source>
</evidence>
<name>AMPA_PSEA8</name>
<gene>
    <name evidence="1" type="primary">pepA</name>
    <name type="ordered locus">PLES_11431</name>
</gene>
<feature type="chain" id="PRO_1000118462" description="Probable cytosol aminopeptidase">
    <location>
        <begin position="1"/>
        <end position="495"/>
    </location>
</feature>
<feature type="active site" evidence="1">
    <location>
        <position position="278"/>
    </location>
</feature>
<feature type="active site" evidence="1">
    <location>
        <position position="352"/>
    </location>
</feature>
<feature type="binding site" evidence="1">
    <location>
        <position position="266"/>
    </location>
    <ligand>
        <name>Mn(2+)</name>
        <dbReference type="ChEBI" id="CHEBI:29035"/>
        <label>2</label>
    </ligand>
</feature>
<feature type="binding site" evidence="1">
    <location>
        <position position="271"/>
    </location>
    <ligand>
        <name>Mn(2+)</name>
        <dbReference type="ChEBI" id="CHEBI:29035"/>
        <label>1</label>
    </ligand>
</feature>
<feature type="binding site" evidence="1">
    <location>
        <position position="271"/>
    </location>
    <ligand>
        <name>Mn(2+)</name>
        <dbReference type="ChEBI" id="CHEBI:29035"/>
        <label>2</label>
    </ligand>
</feature>
<feature type="binding site" evidence="1">
    <location>
        <position position="289"/>
    </location>
    <ligand>
        <name>Mn(2+)</name>
        <dbReference type="ChEBI" id="CHEBI:29035"/>
        <label>2</label>
    </ligand>
</feature>
<feature type="binding site" evidence="1">
    <location>
        <position position="348"/>
    </location>
    <ligand>
        <name>Mn(2+)</name>
        <dbReference type="ChEBI" id="CHEBI:29035"/>
        <label>1</label>
    </ligand>
</feature>
<feature type="binding site" evidence="1">
    <location>
        <position position="350"/>
    </location>
    <ligand>
        <name>Mn(2+)</name>
        <dbReference type="ChEBI" id="CHEBI:29035"/>
        <label>1</label>
    </ligand>
</feature>
<feature type="binding site" evidence="1">
    <location>
        <position position="350"/>
    </location>
    <ligand>
        <name>Mn(2+)</name>
        <dbReference type="ChEBI" id="CHEBI:29035"/>
        <label>2</label>
    </ligand>
</feature>
<proteinExistence type="inferred from homology"/>
<comment type="function">
    <text evidence="1">Presumably involved in the processing and regular turnover of intracellular proteins. Catalyzes the removal of unsubstituted N-terminal amino acids from various peptides.</text>
</comment>
<comment type="catalytic activity">
    <reaction evidence="1">
        <text>Release of an N-terminal amino acid, Xaa-|-Yaa-, in which Xaa is preferably Leu, but may be other amino acids including Pro although not Arg or Lys, and Yaa may be Pro. Amino acid amides and methyl esters are also readily hydrolyzed, but rates on arylamides are exceedingly low.</text>
        <dbReference type="EC" id="3.4.11.1"/>
    </reaction>
</comment>
<comment type="catalytic activity">
    <reaction evidence="1">
        <text>Release of an N-terminal amino acid, preferentially leucine, but not glutamic or aspartic acids.</text>
        <dbReference type="EC" id="3.4.11.10"/>
    </reaction>
</comment>
<comment type="cofactor">
    <cofactor evidence="1">
        <name>Mn(2+)</name>
        <dbReference type="ChEBI" id="CHEBI:29035"/>
    </cofactor>
    <text evidence="1">Binds 2 manganese ions per subunit.</text>
</comment>
<comment type="subcellular location">
    <subcellularLocation>
        <location evidence="1">Cytoplasm</location>
    </subcellularLocation>
</comment>
<comment type="similarity">
    <text evidence="1">Belongs to the peptidase M17 family.</text>
</comment>
<reference key="1">
    <citation type="journal article" date="2009" name="Genome Res.">
        <title>Newly introduced genomic prophage islands are critical determinants of in vivo competitiveness in the Liverpool epidemic strain of Pseudomonas aeruginosa.</title>
        <authorList>
            <person name="Winstanley C."/>
            <person name="Langille M.G.I."/>
            <person name="Fothergill J.L."/>
            <person name="Kukavica-Ibrulj I."/>
            <person name="Paradis-Bleau C."/>
            <person name="Sanschagrin F."/>
            <person name="Thomson N.R."/>
            <person name="Winsor G.L."/>
            <person name="Quail M.A."/>
            <person name="Lennard N."/>
            <person name="Bignell A."/>
            <person name="Clarke L."/>
            <person name="Seeger K."/>
            <person name="Saunders D."/>
            <person name="Harris D."/>
            <person name="Parkhill J."/>
            <person name="Hancock R.E.W."/>
            <person name="Brinkman F.S.L."/>
            <person name="Levesque R.C."/>
        </authorList>
    </citation>
    <scope>NUCLEOTIDE SEQUENCE [LARGE SCALE GENOMIC DNA]</scope>
    <source>
        <strain>LESB58</strain>
    </source>
</reference>
<accession>B7UVT6</accession>
<dbReference type="EC" id="3.4.11.1" evidence="1"/>
<dbReference type="EC" id="3.4.11.10" evidence="1"/>
<dbReference type="EMBL" id="FM209186">
    <property type="protein sequence ID" value="CAW25870.1"/>
    <property type="molecule type" value="Genomic_DNA"/>
</dbReference>
<dbReference type="RefSeq" id="WP_003092867.1">
    <property type="nucleotide sequence ID" value="NC_011770.1"/>
</dbReference>
<dbReference type="SMR" id="B7UVT6"/>
<dbReference type="MEROPS" id="M17.003"/>
<dbReference type="KEGG" id="pag:PLES_11431"/>
<dbReference type="HOGENOM" id="CLU_013734_2_2_6"/>
<dbReference type="GO" id="GO:0005737">
    <property type="term" value="C:cytoplasm"/>
    <property type="evidence" value="ECO:0007669"/>
    <property type="project" value="UniProtKB-SubCell"/>
</dbReference>
<dbReference type="GO" id="GO:0030145">
    <property type="term" value="F:manganese ion binding"/>
    <property type="evidence" value="ECO:0007669"/>
    <property type="project" value="UniProtKB-UniRule"/>
</dbReference>
<dbReference type="GO" id="GO:0070006">
    <property type="term" value="F:metalloaminopeptidase activity"/>
    <property type="evidence" value="ECO:0007669"/>
    <property type="project" value="InterPro"/>
</dbReference>
<dbReference type="GO" id="GO:0006508">
    <property type="term" value="P:proteolysis"/>
    <property type="evidence" value="ECO:0007669"/>
    <property type="project" value="UniProtKB-KW"/>
</dbReference>
<dbReference type="CDD" id="cd00433">
    <property type="entry name" value="Peptidase_M17"/>
    <property type="match status" value="1"/>
</dbReference>
<dbReference type="FunFam" id="3.40.630.10:FF:000004">
    <property type="entry name" value="Probable cytosol aminopeptidase"/>
    <property type="match status" value="1"/>
</dbReference>
<dbReference type="Gene3D" id="3.40.220.10">
    <property type="entry name" value="Leucine Aminopeptidase, subunit E, domain 1"/>
    <property type="match status" value="1"/>
</dbReference>
<dbReference type="Gene3D" id="3.40.630.10">
    <property type="entry name" value="Zn peptidases"/>
    <property type="match status" value="1"/>
</dbReference>
<dbReference type="HAMAP" id="MF_00181">
    <property type="entry name" value="Cytosol_peptidase_M17"/>
    <property type="match status" value="1"/>
</dbReference>
<dbReference type="InterPro" id="IPR011356">
    <property type="entry name" value="Leucine_aapep/pepB"/>
</dbReference>
<dbReference type="InterPro" id="IPR043472">
    <property type="entry name" value="Macro_dom-like"/>
</dbReference>
<dbReference type="InterPro" id="IPR000819">
    <property type="entry name" value="Peptidase_M17_C"/>
</dbReference>
<dbReference type="InterPro" id="IPR023042">
    <property type="entry name" value="Peptidase_M17_leu_NH2_pept"/>
</dbReference>
<dbReference type="InterPro" id="IPR008283">
    <property type="entry name" value="Peptidase_M17_N"/>
</dbReference>
<dbReference type="NCBIfam" id="NF002073">
    <property type="entry name" value="PRK00913.1-2"/>
    <property type="match status" value="1"/>
</dbReference>
<dbReference type="NCBIfam" id="NF002074">
    <property type="entry name" value="PRK00913.1-4"/>
    <property type="match status" value="1"/>
</dbReference>
<dbReference type="NCBIfam" id="NF002077">
    <property type="entry name" value="PRK00913.2-4"/>
    <property type="match status" value="1"/>
</dbReference>
<dbReference type="PANTHER" id="PTHR11963:SF23">
    <property type="entry name" value="CYTOSOL AMINOPEPTIDASE"/>
    <property type="match status" value="1"/>
</dbReference>
<dbReference type="PANTHER" id="PTHR11963">
    <property type="entry name" value="LEUCINE AMINOPEPTIDASE-RELATED"/>
    <property type="match status" value="1"/>
</dbReference>
<dbReference type="Pfam" id="PF00883">
    <property type="entry name" value="Peptidase_M17"/>
    <property type="match status" value="1"/>
</dbReference>
<dbReference type="Pfam" id="PF02789">
    <property type="entry name" value="Peptidase_M17_N"/>
    <property type="match status" value="1"/>
</dbReference>
<dbReference type="PRINTS" id="PR00481">
    <property type="entry name" value="LAMNOPPTDASE"/>
</dbReference>
<dbReference type="SUPFAM" id="SSF52949">
    <property type="entry name" value="Macro domain-like"/>
    <property type="match status" value="1"/>
</dbReference>
<dbReference type="SUPFAM" id="SSF53187">
    <property type="entry name" value="Zn-dependent exopeptidases"/>
    <property type="match status" value="1"/>
</dbReference>
<dbReference type="PROSITE" id="PS00631">
    <property type="entry name" value="CYTOSOL_AP"/>
    <property type="match status" value="1"/>
</dbReference>
<sequence length="495" mass="52332">MEFLVKSVRPETLKTATLVLAVGEGRKLGASAKAVDDATGGAISAVLKRGDLAGKVGQTLLLQSLPNLKAERVLLVGAGKERELGDRQYRKLASAVLSTLKGLAGADAALALGDLAVKGRDAHAKARLLVETLADGLYVFDRYKSQKAEPLKLKKLTLLADKADSAAVEQGSKEAQAIANGMALTRDLGNLPPNVCHPTFLGEQAKGLAKEFKGLKVEVLDEKKLRELGMGSFLAVAQGSDQPPRLIVLQYNGAKKDQAPHVLVGKGITFDTGGISLKPGLGMDEMKFDMCGAASVFGTFRAVLELQLPINLVGLLACAENMPSGGATRPGDIVTTMSGQTVEILNTDAEGRLVLCDALTYAERFKPQSVIDIATLTGACIVALGSNTSGLMGNNEALVRQLLKAGEFADDRAWQLPLFDEYQEQLDSPFADIANIGGPKAGTITAGCFLSRFAKKYHWAHLDIAGTAWISGGKDKGATGRPVPLLTQYLLERAK</sequence>
<keyword id="KW-0031">Aminopeptidase</keyword>
<keyword id="KW-0963">Cytoplasm</keyword>
<keyword id="KW-0378">Hydrolase</keyword>
<keyword id="KW-0464">Manganese</keyword>
<keyword id="KW-0479">Metal-binding</keyword>
<keyword id="KW-0645">Protease</keyword>
<protein>
    <recommendedName>
        <fullName evidence="1">Probable cytosol aminopeptidase</fullName>
        <ecNumber evidence="1">3.4.11.1</ecNumber>
    </recommendedName>
    <alternativeName>
        <fullName evidence="1">Leucine aminopeptidase</fullName>
        <shortName evidence="1">LAP</shortName>
        <ecNumber evidence="1">3.4.11.10</ecNumber>
    </alternativeName>
    <alternativeName>
        <fullName evidence="1">Leucyl aminopeptidase</fullName>
    </alternativeName>
</protein>
<organism>
    <name type="scientific">Pseudomonas aeruginosa (strain LESB58)</name>
    <dbReference type="NCBI Taxonomy" id="557722"/>
    <lineage>
        <taxon>Bacteria</taxon>
        <taxon>Pseudomonadati</taxon>
        <taxon>Pseudomonadota</taxon>
        <taxon>Gammaproteobacteria</taxon>
        <taxon>Pseudomonadales</taxon>
        <taxon>Pseudomonadaceae</taxon>
        <taxon>Pseudomonas</taxon>
    </lineage>
</organism>